<dbReference type="EMBL" id="GL988047">
    <property type="protein sequence ID" value="EGS17740.1"/>
    <property type="molecule type" value="Genomic_DNA"/>
</dbReference>
<dbReference type="EMBL" id="JF276287">
    <property type="protein sequence ID" value="AEL00683.1"/>
    <property type="molecule type" value="Genomic_DNA"/>
</dbReference>
<dbReference type="RefSeq" id="XP_006697358.1">
    <property type="nucleotide sequence ID" value="XM_006697295.1"/>
</dbReference>
<dbReference type="PDB" id="5CWU">
    <property type="method" value="X-ray"/>
    <property type="resolution" value="3.35 A"/>
    <property type="chains" value="A/B/C/D/E/F/G/H=1447-1858"/>
</dbReference>
<dbReference type="PDB" id="7MVW">
    <property type="method" value="X-ray"/>
    <property type="resolution" value="2.76 A"/>
    <property type="chains" value="A=1-1134"/>
</dbReference>
<dbReference type="PDB" id="7MVX">
    <property type="method" value="X-ray"/>
    <property type="resolution" value="4.35 A"/>
    <property type="chains" value="A=1-1858"/>
</dbReference>
<dbReference type="PDB" id="7MVY">
    <property type="method" value="EM"/>
    <property type="resolution" value="2.39 A"/>
    <property type="chains" value="A=1-1858"/>
</dbReference>
<dbReference type="PDB" id="7MVZ">
    <property type="method" value="EM"/>
    <property type="resolution" value="2.81 A"/>
    <property type="chains" value="A=1-1858"/>
</dbReference>
<dbReference type="PDBsum" id="5CWU"/>
<dbReference type="PDBsum" id="7MVW"/>
<dbReference type="PDBsum" id="7MVX"/>
<dbReference type="PDBsum" id="7MVY"/>
<dbReference type="PDBsum" id="7MVZ"/>
<dbReference type="EMDB" id="EMD-24058"/>
<dbReference type="EMDB" id="EMD-24059"/>
<dbReference type="SMR" id="G0SFH5"/>
<dbReference type="IntAct" id="G0SFH5">
    <property type="interactions" value="4"/>
</dbReference>
<dbReference type="STRING" id="759272.G0SFH5"/>
<dbReference type="TCDB" id="1.I.1.1.2">
    <property type="family name" value="the nuclear pore complex (npc) family"/>
</dbReference>
<dbReference type="GeneID" id="18261123"/>
<dbReference type="KEGG" id="cthr:CTHT_0070850"/>
<dbReference type="eggNOG" id="ENOG502QQFV">
    <property type="taxonomic scope" value="Eukaryota"/>
</dbReference>
<dbReference type="HOGENOM" id="CLU_001029_0_0_1"/>
<dbReference type="OMA" id="HSWKFFA"/>
<dbReference type="OrthoDB" id="102511at2759"/>
<dbReference type="EvolutionaryTrace" id="G0SFH5"/>
<dbReference type="Proteomes" id="UP000008066">
    <property type="component" value="Unassembled WGS sequence"/>
</dbReference>
<dbReference type="GO" id="GO:0031965">
    <property type="term" value="C:nuclear membrane"/>
    <property type="evidence" value="ECO:0007669"/>
    <property type="project" value="UniProtKB-SubCell"/>
</dbReference>
<dbReference type="GO" id="GO:0044611">
    <property type="term" value="C:nuclear pore inner ring"/>
    <property type="evidence" value="ECO:0007669"/>
    <property type="project" value="TreeGrafter"/>
</dbReference>
<dbReference type="GO" id="GO:0017056">
    <property type="term" value="F:structural constituent of nuclear pore"/>
    <property type="evidence" value="ECO:0007669"/>
    <property type="project" value="InterPro"/>
</dbReference>
<dbReference type="GO" id="GO:0051028">
    <property type="term" value="P:mRNA transport"/>
    <property type="evidence" value="ECO:0007669"/>
    <property type="project" value="UniProtKB-KW"/>
</dbReference>
<dbReference type="GO" id="GO:0006606">
    <property type="term" value="P:protein import into nucleus"/>
    <property type="evidence" value="ECO:0007669"/>
    <property type="project" value="TreeGrafter"/>
</dbReference>
<dbReference type="GO" id="GO:0006405">
    <property type="term" value="P:RNA export from nucleus"/>
    <property type="evidence" value="ECO:0007669"/>
    <property type="project" value="TreeGrafter"/>
</dbReference>
<dbReference type="Gene3D" id="1.25.10.70">
    <property type="match status" value="1"/>
</dbReference>
<dbReference type="InterPro" id="IPR018864">
    <property type="entry name" value="Nucleoporin_Nup188_N"/>
</dbReference>
<dbReference type="InterPro" id="IPR044840">
    <property type="entry name" value="Nup188"/>
</dbReference>
<dbReference type="InterPro" id="IPR041634">
    <property type="entry name" value="Nup188_C"/>
</dbReference>
<dbReference type="InterPro" id="IPR048883">
    <property type="entry name" value="Nup188_N-subdom_III"/>
</dbReference>
<dbReference type="PANTHER" id="PTHR31431:SF1">
    <property type="entry name" value="NUCLEOPORIN NUP188"/>
    <property type="match status" value="1"/>
</dbReference>
<dbReference type="PANTHER" id="PTHR31431">
    <property type="entry name" value="NUCLEOPORIN NUP188 HOMOLOG"/>
    <property type="match status" value="1"/>
</dbReference>
<dbReference type="Pfam" id="PF18378">
    <property type="entry name" value="Nup188_C"/>
    <property type="match status" value="1"/>
</dbReference>
<dbReference type="Pfam" id="PF10487">
    <property type="entry name" value="Nup188_N"/>
    <property type="match status" value="1"/>
</dbReference>
<dbReference type="Pfam" id="PF21093">
    <property type="entry name" value="Nup188_N-subdom_III"/>
    <property type="match status" value="1"/>
</dbReference>
<dbReference type="Pfam" id="PF21094">
    <property type="entry name" value="Nup188_SH3-like"/>
    <property type="match status" value="1"/>
</dbReference>
<feature type="chain" id="PRO_0000433169" description="Nucleoporin NUP188">
    <location>
        <begin position="1"/>
        <end position="1858"/>
    </location>
</feature>
<feature type="turn" evidence="7">
    <location>
        <begin position="7"/>
        <end position="9"/>
    </location>
</feature>
<feature type="helix" evidence="7">
    <location>
        <begin position="13"/>
        <end position="18"/>
    </location>
</feature>
<feature type="strand" evidence="7">
    <location>
        <begin position="19"/>
        <end position="21"/>
    </location>
</feature>
<feature type="helix" evidence="7">
    <location>
        <begin position="26"/>
        <end position="35"/>
    </location>
</feature>
<feature type="helix" evidence="7">
    <location>
        <begin position="38"/>
        <end position="41"/>
    </location>
</feature>
<feature type="helix" evidence="7">
    <location>
        <begin position="44"/>
        <end position="51"/>
    </location>
</feature>
<feature type="helix" evidence="7">
    <location>
        <begin position="53"/>
        <end position="60"/>
    </location>
</feature>
<feature type="helix" evidence="7">
    <location>
        <begin position="62"/>
        <end position="65"/>
    </location>
</feature>
<feature type="helix" evidence="7">
    <location>
        <begin position="72"/>
        <end position="79"/>
    </location>
</feature>
<feature type="helix" evidence="7">
    <location>
        <begin position="90"/>
        <end position="102"/>
    </location>
</feature>
<feature type="strand" evidence="7">
    <location>
        <begin position="103"/>
        <end position="105"/>
    </location>
</feature>
<feature type="helix" evidence="7">
    <location>
        <begin position="107"/>
        <end position="119"/>
    </location>
</feature>
<feature type="helix" evidence="7">
    <location>
        <begin position="121"/>
        <end position="126"/>
    </location>
</feature>
<feature type="helix" evidence="7">
    <location>
        <begin position="132"/>
        <end position="141"/>
    </location>
</feature>
<feature type="strand" evidence="7">
    <location>
        <begin position="158"/>
        <end position="160"/>
    </location>
</feature>
<feature type="helix" evidence="7">
    <location>
        <begin position="164"/>
        <end position="171"/>
    </location>
</feature>
<feature type="helix" evidence="7">
    <location>
        <begin position="174"/>
        <end position="204"/>
    </location>
</feature>
<feature type="helix" evidence="7">
    <location>
        <begin position="212"/>
        <end position="225"/>
    </location>
</feature>
<feature type="strand" evidence="7">
    <location>
        <begin position="232"/>
        <end position="234"/>
    </location>
</feature>
<feature type="helix" evidence="7">
    <location>
        <begin position="238"/>
        <end position="241"/>
    </location>
</feature>
<feature type="helix" evidence="7">
    <location>
        <begin position="243"/>
        <end position="259"/>
    </location>
</feature>
<feature type="strand" evidence="7">
    <location>
        <begin position="263"/>
        <end position="265"/>
    </location>
</feature>
<feature type="turn" evidence="7">
    <location>
        <begin position="267"/>
        <end position="269"/>
    </location>
</feature>
<feature type="helix" evidence="7">
    <location>
        <begin position="272"/>
        <end position="298"/>
    </location>
</feature>
<feature type="helix" evidence="7">
    <location>
        <begin position="307"/>
        <end position="320"/>
    </location>
</feature>
<feature type="turn" evidence="7">
    <location>
        <begin position="321"/>
        <end position="323"/>
    </location>
</feature>
<feature type="helix" evidence="7">
    <location>
        <begin position="324"/>
        <end position="327"/>
    </location>
</feature>
<feature type="strand" evidence="7">
    <location>
        <begin position="329"/>
        <end position="332"/>
    </location>
</feature>
<feature type="helix" evidence="7">
    <location>
        <begin position="333"/>
        <end position="351"/>
    </location>
</feature>
<feature type="helix" evidence="7">
    <location>
        <begin position="353"/>
        <end position="362"/>
    </location>
</feature>
<feature type="helix" evidence="7">
    <location>
        <begin position="372"/>
        <end position="374"/>
    </location>
</feature>
<feature type="helix" evidence="7">
    <location>
        <begin position="376"/>
        <end position="392"/>
    </location>
</feature>
<feature type="helix" evidence="7">
    <location>
        <begin position="397"/>
        <end position="418"/>
    </location>
</feature>
<feature type="helix" evidence="7">
    <location>
        <begin position="464"/>
        <end position="470"/>
    </location>
</feature>
<feature type="turn" evidence="7">
    <location>
        <begin position="473"/>
        <end position="475"/>
    </location>
</feature>
<feature type="helix" evidence="7">
    <location>
        <begin position="478"/>
        <end position="488"/>
    </location>
</feature>
<feature type="helix" evidence="7">
    <location>
        <begin position="489"/>
        <end position="491"/>
    </location>
</feature>
<feature type="helix" evidence="7">
    <location>
        <begin position="492"/>
        <end position="503"/>
    </location>
</feature>
<feature type="strand" evidence="7">
    <location>
        <begin position="505"/>
        <end position="507"/>
    </location>
</feature>
<feature type="helix" evidence="7">
    <location>
        <begin position="514"/>
        <end position="530"/>
    </location>
</feature>
<feature type="turn" evidence="7">
    <location>
        <begin position="531"/>
        <end position="534"/>
    </location>
</feature>
<feature type="helix" evidence="7">
    <location>
        <begin position="539"/>
        <end position="549"/>
    </location>
</feature>
<feature type="turn" evidence="7">
    <location>
        <begin position="550"/>
        <end position="552"/>
    </location>
</feature>
<feature type="helix" evidence="6">
    <location>
        <begin position="555"/>
        <end position="557"/>
    </location>
</feature>
<feature type="helix" evidence="7">
    <location>
        <begin position="565"/>
        <end position="576"/>
    </location>
</feature>
<feature type="helix" evidence="7">
    <location>
        <begin position="578"/>
        <end position="582"/>
    </location>
</feature>
<feature type="helix" evidence="7">
    <location>
        <begin position="585"/>
        <end position="590"/>
    </location>
</feature>
<feature type="strand" evidence="8">
    <location>
        <begin position="593"/>
        <end position="595"/>
    </location>
</feature>
<feature type="helix" evidence="7">
    <location>
        <begin position="596"/>
        <end position="609"/>
    </location>
</feature>
<feature type="strand" evidence="7">
    <location>
        <begin position="610"/>
        <end position="612"/>
    </location>
</feature>
<feature type="helix" evidence="7">
    <location>
        <begin position="614"/>
        <end position="616"/>
    </location>
</feature>
<feature type="helix" evidence="7">
    <location>
        <begin position="619"/>
        <end position="625"/>
    </location>
</feature>
<feature type="strand" evidence="7">
    <location>
        <begin position="626"/>
        <end position="628"/>
    </location>
</feature>
<feature type="strand" evidence="7">
    <location>
        <begin position="630"/>
        <end position="632"/>
    </location>
</feature>
<feature type="helix" evidence="7">
    <location>
        <begin position="636"/>
        <end position="640"/>
    </location>
</feature>
<feature type="strand" evidence="6">
    <location>
        <begin position="641"/>
        <end position="644"/>
    </location>
</feature>
<feature type="turn" evidence="7">
    <location>
        <begin position="649"/>
        <end position="652"/>
    </location>
</feature>
<feature type="strand" evidence="7">
    <location>
        <begin position="653"/>
        <end position="655"/>
    </location>
</feature>
<feature type="strand" evidence="7">
    <location>
        <begin position="687"/>
        <end position="689"/>
    </location>
</feature>
<feature type="strand" evidence="7">
    <location>
        <begin position="698"/>
        <end position="700"/>
    </location>
</feature>
<feature type="helix" evidence="7">
    <location>
        <begin position="706"/>
        <end position="718"/>
    </location>
</feature>
<feature type="helix" evidence="7">
    <location>
        <begin position="732"/>
        <end position="754"/>
    </location>
</feature>
<feature type="helix" evidence="7">
    <location>
        <begin position="762"/>
        <end position="770"/>
    </location>
</feature>
<feature type="turn" evidence="7">
    <location>
        <begin position="771"/>
        <end position="773"/>
    </location>
</feature>
<feature type="helix" evidence="7">
    <location>
        <begin position="780"/>
        <end position="791"/>
    </location>
</feature>
<feature type="turn" evidence="6">
    <location>
        <begin position="796"/>
        <end position="798"/>
    </location>
</feature>
<feature type="helix" evidence="7">
    <location>
        <begin position="801"/>
        <end position="820"/>
    </location>
</feature>
<feature type="helix" evidence="7">
    <location>
        <begin position="822"/>
        <end position="829"/>
    </location>
</feature>
<feature type="strand" evidence="7">
    <location>
        <begin position="833"/>
        <end position="836"/>
    </location>
</feature>
<feature type="strand" evidence="7">
    <location>
        <begin position="839"/>
        <end position="841"/>
    </location>
</feature>
<feature type="helix" evidence="7">
    <location>
        <begin position="844"/>
        <end position="847"/>
    </location>
</feature>
<feature type="helix" evidence="7">
    <location>
        <begin position="855"/>
        <end position="876"/>
    </location>
</feature>
<feature type="helix" evidence="7">
    <location>
        <begin position="905"/>
        <end position="925"/>
    </location>
</feature>
<feature type="turn" evidence="7">
    <location>
        <begin position="926"/>
        <end position="928"/>
    </location>
</feature>
<feature type="strand" evidence="6">
    <location>
        <begin position="930"/>
        <end position="933"/>
    </location>
</feature>
<feature type="helix" evidence="7">
    <location>
        <begin position="934"/>
        <end position="956"/>
    </location>
</feature>
<feature type="helix" evidence="7">
    <location>
        <begin position="961"/>
        <end position="963"/>
    </location>
</feature>
<feature type="helix" evidence="7">
    <location>
        <begin position="967"/>
        <end position="978"/>
    </location>
</feature>
<feature type="strand" evidence="7">
    <location>
        <begin position="982"/>
        <end position="984"/>
    </location>
</feature>
<feature type="turn" evidence="7">
    <location>
        <begin position="985"/>
        <end position="989"/>
    </location>
</feature>
<feature type="helix" evidence="7">
    <location>
        <begin position="990"/>
        <end position="1000"/>
    </location>
</feature>
<feature type="helix" evidence="7">
    <location>
        <begin position="1009"/>
        <end position="1034"/>
    </location>
</feature>
<feature type="turn" evidence="7">
    <location>
        <begin position="1035"/>
        <end position="1037"/>
    </location>
</feature>
<feature type="helix" evidence="7">
    <location>
        <begin position="1043"/>
        <end position="1054"/>
    </location>
</feature>
<feature type="helix" evidence="7">
    <location>
        <begin position="1057"/>
        <end position="1059"/>
    </location>
</feature>
<feature type="helix" evidence="7">
    <location>
        <begin position="1062"/>
        <end position="1064"/>
    </location>
</feature>
<feature type="helix" evidence="7">
    <location>
        <begin position="1065"/>
        <end position="1080"/>
    </location>
</feature>
<feature type="helix" evidence="7">
    <location>
        <begin position="1092"/>
        <end position="1096"/>
    </location>
</feature>
<feature type="helix" evidence="7">
    <location>
        <begin position="1098"/>
        <end position="1108"/>
    </location>
</feature>
<feature type="strand" evidence="7">
    <location>
        <begin position="1110"/>
        <end position="1112"/>
    </location>
</feature>
<feature type="turn" evidence="7">
    <location>
        <begin position="1113"/>
        <end position="1115"/>
    </location>
</feature>
<feature type="helix" evidence="7">
    <location>
        <begin position="1119"/>
        <end position="1133"/>
    </location>
</feature>
<feature type="helix" evidence="7">
    <location>
        <begin position="1138"/>
        <end position="1144"/>
    </location>
</feature>
<feature type="strand" evidence="7">
    <location>
        <begin position="1167"/>
        <end position="1169"/>
    </location>
</feature>
<feature type="helix" evidence="7">
    <location>
        <begin position="1170"/>
        <end position="1178"/>
    </location>
</feature>
<feature type="turn" evidence="7">
    <location>
        <begin position="1179"/>
        <end position="1183"/>
    </location>
</feature>
<feature type="helix" evidence="7">
    <location>
        <begin position="1186"/>
        <end position="1202"/>
    </location>
</feature>
<feature type="helix" evidence="7">
    <location>
        <begin position="1204"/>
        <end position="1213"/>
    </location>
</feature>
<feature type="helix" evidence="7">
    <location>
        <begin position="1215"/>
        <end position="1227"/>
    </location>
</feature>
<feature type="strand" evidence="7">
    <location>
        <begin position="1234"/>
        <end position="1237"/>
    </location>
</feature>
<feature type="helix" evidence="7">
    <location>
        <begin position="1241"/>
        <end position="1265"/>
    </location>
</feature>
<feature type="helix" evidence="7">
    <location>
        <begin position="1270"/>
        <end position="1276"/>
    </location>
</feature>
<feature type="helix" evidence="7">
    <location>
        <begin position="1277"/>
        <end position="1279"/>
    </location>
</feature>
<feature type="helix" evidence="7">
    <location>
        <begin position="1281"/>
        <end position="1286"/>
    </location>
</feature>
<feature type="helix" evidence="7">
    <location>
        <begin position="1295"/>
        <end position="1308"/>
    </location>
</feature>
<feature type="strand" evidence="7">
    <location>
        <begin position="1310"/>
        <end position="1312"/>
    </location>
</feature>
<feature type="helix" evidence="7">
    <location>
        <begin position="1315"/>
        <end position="1317"/>
    </location>
</feature>
<feature type="strand" evidence="8">
    <location>
        <begin position="1321"/>
        <end position="1323"/>
    </location>
</feature>
<feature type="strand" evidence="7">
    <location>
        <begin position="1331"/>
        <end position="1333"/>
    </location>
</feature>
<feature type="helix" evidence="7">
    <location>
        <begin position="1335"/>
        <end position="1341"/>
    </location>
</feature>
<feature type="helix" evidence="8">
    <location>
        <begin position="1351"/>
        <end position="1353"/>
    </location>
</feature>
<feature type="helix" evidence="7">
    <location>
        <begin position="1356"/>
        <end position="1390"/>
    </location>
</feature>
<feature type="strand" evidence="7">
    <location>
        <begin position="1393"/>
        <end position="1396"/>
    </location>
</feature>
<feature type="helix" evidence="7">
    <location>
        <begin position="1397"/>
        <end position="1416"/>
    </location>
</feature>
<feature type="turn" evidence="7">
    <location>
        <begin position="1422"/>
        <end position="1424"/>
    </location>
</feature>
<feature type="turn" evidence="7">
    <location>
        <begin position="1429"/>
        <end position="1431"/>
    </location>
</feature>
<feature type="helix" evidence="7">
    <location>
        <begin position="1433"/>
        <end position="1446"/>
    </location>
</feature>
<feature type="helix" evidence="7">
    <location>
        <begin position="1453"/>
        <end position="1465"/>
    </location>
</feature>
<feature type="strand" evidence="7">
    <location>
        <begin position="1471"/>
        <end position="1474"/>
    </location>
</feature>
<feature type="helix" evidence="7">
    <location>
        <begin position="1476"/>
        <end position="1494"/>
    </location>
</feature>
<feature type="helix" evidence="7">
    <location>
        <begin position="1508"/>
        <end position="1516"/>
    </location>
</feature>
<feature type="helix" evidence="7">
    <location>
        <begin position="1519"/>
        <end position="1530"/>
    </location>
</feature>
<feature type="helix" evidence="7">
    <location>
        <begin position="1544"/>
        <end position="1558"/>
    </location>
</feature>
<feature type="helix" evidence="7">
    <location>
        <begin position="1562"/>
        <end position="1564"/>
    </location>
</feature>
<feature type="turn" evidence="8">
    <location>
        <begin position="1565"/>
        <end position="1567"/>
    </location>
</feature>
<feature type="helix" evidence="7">
    <location>
        <begin position="1568"/>
        <end position="1576"/>
    </location>
</feature>
<feature type="turn" evidence="7">
    <location>
        <begin position="1577"/>
        <end position="1579"/>
    </location>
</feature>
<feature type="helix" evidence="7">
    <location>
        <begin position="1580"/>
        <end position="1588"/>
    </location>
</feature>
<feature type="helix" evidence="7">
    <location>
        <begin position="1619"/>
        <end position="1631"/>
    </location>
</feature>
<feature type="helix" evidence="7">
    <location>
        <begin position="1635"/>
        <end position="1642"/>
    </location>
</feature>
<feature type="helix" evidence="7">
    <location>
        <begin position="1644"/>
        <end position="1652"/>
    </location>
</feature>
<feature type="helix" evidence="7">
    <location>
        <begin position="1656"/>
        <end position="1660"/>
    </location>
</feature>
<feature type="strand" evidence="5">
    <location>
        <begin position="1661"/>
        <end position="1663"/>
    </location>
</feature>
<feature type="strand" evidence="5">
    <location>
        <begin position="1665"/>
        <end position="1667"/>
    </location>
</feature>
<feature type="helix" evidence="7">
    <location>
        <begin position="1671"/>
        <end position="1682"/>
    </location>
</feature>
<feature type="helix" evidence="7">
    <location>
        <begin position="1684"/>
        <end position="1694"/>
    </location>
</feature>
<feature type="turn" evidence="7">
    <location>
        <begin position="1697"/>
        <end position="1699"/>
    </location>
</feature>
<feature type="helix" evidence="7">
    <location>
        <begin position="1700"/>
        <end position="1709"/>
    </location>
</feature>
<feature type="helix" evidence="7">
    <location>
        <begin position="1711"/>
        <end position="1720"/>
    </location>
</feature>
<feature type="helix" evidence="7">
    <location>
        <begin position="1746"/>
        <end position="1765"/>
    </location>
</feature>
<feature type="strand" evidence="7">
    <location>
        <begin position="1769"/>
        <end position="1771"/>
    </location>
</feature>
<feature type="helix" evidence="7">
    <location>
        <begin position="1780"/>
        <end position="1788"/>
    </location>
</feature>
<feature type="helix" evidence="7">
    <location>
        <begin position="1795"/>
        <end position="1799"/>
    </location>
</feature>
<feature type="helix" evidence="7">
    <location>
        <begin position="1835"/>
        <end position="1849"/>
    </location>
</feature>
<reference key="1">
    <citation type="journal article" date="2011" name="Cell">
        <title>Insight into structure and assembly of the nuclear pore complex by utilizing the genome of a eukaryotic thermophile.</title>
        <authorList>
            <person name="Amlacher S."/>
            <person name="Sarges P."/>
            <person name="Flemming D."/>
            <person name="van Noort V."/>
            <person name="Kunze R."/>
            <person name="Devos D.P."/>
            <person name="Arumugam M."/>
            <person name="Bork P."/>
            <person name="Hurt E."/>
        </authorList>
    </citation>
    <scope>NUCLEOTIDE SEQUENCE [LARGE SCALE GENOMIC DNA]</scope>
    <scope>SUBUNIT</scope>
    <source>
        <strain>DSM 1495 / CBS 144.50 / IMI 039719</strain>
    </source>
</reference>
<sequence>MATLTDRTYLPPLEDCLTGRTVILSWRLVASALEDADLARLTSPALSTFLRDGFVHELLKHPARVFEPKDLKQEFETKTSSIQTVAPGVDTIKKDALWLADAVAINQVAALRIVLIEYQTRAHSHLVLPLSTQDVANIQEAAGVGDAHASSILSLLNPASAVDAETMWCDFETEARRRERILATYLSERRSFTAAVDALVTFLLHSAPGQHKDLDSLRRALLKDAFAFDEDLDVPDRSKLLTMAPTYMNLVEDCIARAQALPAKLGESFKTEAFELDWLRTAITEAVHSLSIAFQALDLDTPYFAPHELLSEWFELMNSSLFLESILGFEVVADLAMPARSLVSAICLKMLNIDRTIQFLHDFDYPDGEEPYLLSSQTLNKIHTAVTNAVNSGVAASLPVAFAWSLIVHQMHLGYQERAERRDLLVNQRAQAGFELEFQPSASTPNRRRRNSAGSIVSLEASPYDDFLREQRLDNDIAPVEQIAMLATSRGQVYQVMSEMALCLGTTHEAAFRPAVGARARLVFQDLLKRSAYLIPYQDEPVFSLLAILATGRQYWDVTDALSASSLNQVYTDMLDDETLFTQFTMQAINRFPYEFNPFSVLCRVLAAALITNKDKADVVTGWLWRTPTLTVDWNPAWDRSYELCFEDENTNSFRLTRDVDLFGSASPARPRHLAAEERFIIPEGTLGRFVTDVGRTARLEFEHSALALLGKRLEVKAAEEICDSGMAPLDVDEQAEAVAMLATVLRAESLKSTAKGGDPEAPLKFLKEASRLLPHNKDILTVISDTIDGLVEKELLELDGPQIAVLASCLQFLHAALAVCPGRVWAYMSRCALIAGDARPGRLSRITGSLDMYAERFDLLSSAVKLFAALIDSAACSAVQRRAGSTALVSVRSAVENPWLGTSEKILSRVALAIAQAALDVYESTTTWRFRSELDRSILVRDVVGLMHKLVVHAHTLSSHLTSTLSPAAAHIISSFLTPPPSASSLRFQPLLGTLLVALITPRATLYPGQSRILAERVTSVLAFCTSLLRAADFLGQTHIPLQTHLFQSACLLARLPAANAVYRAPVLELLRALVEVAGRAANGSGEPPSLLGYLGSHAARSFISLVEGIDKPFGRVEHAVVTWRFFAAVIRNRQQWMAGCLLTGRTPREALKGGGEQKIERKVGEGSVLAAAMERLREVKSLDVQEAVAVMDFVVSAQNYWPWTIFAVRKEKEVVDALRGYVRGLKAPGMVMKTDGAAAAAFQARIAAYVAETFAMQLYHMRQMRQAEKFAGELVADLDYFLREGVMVWGYNASLHGNFARNFAKRFPGVEVDDFKRTMWLPRELGKGYYYALEVAEQMLGFDAGWGGVKQSGFRKEMETANLNLSLVEAQVSLFHAWEYLLLELTLSLLPKKENAAFARQVLQVVEQCLEANQRSQPPENIFVVLGHARAGLALTLLQRLADANQLPRDVTHLLALVSSAIHAVENPFGANDLPYFRTLLKILFVVLRAAKQGTAKPGESNVAITQQVLTILDRVVARCFRALAALVHEQQQNATDGTTTAPEDLALITAILQACLSVPGIEQCQVQVLNIMAAHDVFQVAVALFSWADRLLPANPSPASSSTSTSATNPASGDPVYGELALLFLLELSALPALAEHLACDGLLGHLAAARLAGYMRRTNVGPFAENAGAARCYAIWAKCLLPLLLNILAALGSTVAPEVAWVLNQFPNLLQSSVERIEPPGFSRPTLSLASTPPRQKFISLLEISEIHSLALLTRVLAACRAQNARDVPEVTWDGAKVLECVEYWLRGRKVLRERLVPLGPREVEWRGMVATGGVVGVAGDGGEGCENRLEEKAVGLLVGVREVLEGGLEGEGE</sequence>
<gene>
    <name type="primary">NUP188</name>
    <name type="ORF">CTHT_0070850</name>
</gene>
<accession>G0SFH5</accession>
<accession>G0ZGU5</accession>
<proteinExistence type="evidence at protein level"/>
<protein>
    <recommendedName>
        <fullName evidence="3">Nucleoporin NUP188</fullName>
    </recommendedName>
    <alternativeName>
        <fullName>Nuclear pore protein NUP188</fullName>
    </alternativeName>
</protein>
<name>NU188_CHATD</name>
<keyword id="KW-0002">3D-structure</keyword>
<keyword id="KW-0472">Membrane</keyword>
<keyword id="KW-0509">mRNA transport</keyword>
<keyword id="KW-0906">Nuclear pore complex</keyword>
<keyword id="KW-0539">Nucleus</keyword>
<keyword id="KW-0653">Protein transport</keyword>
<keyword id="KW-1185">Reference proteome</keyword>
<keyword id="KW-0811">Translocation</keyword>
<keyword id="KW-0813">Transport</keyword>
<comment type="function">
    <text evidence="1">Functions as a component of the nuclear pore complex (NPC). NPC components, collectively referred to as nucleoporins (NUPs), can play the role of both NPC structural components and of docking or interaction partners for transiently associated nuclear transport factors. NUP188 probably plays an important role in NPC assembly and organization.</text>
</comment>
<comment type="subunit">
    <text evidence="1 2">Component of the nuclear pore complex (NPC). NPC constitutes the exclusive means of nucleocytoplasmic transport. NPCs allow the passive diffusion of ions and small molecules and the active, nuclear transport receptor-mediated bidirectional transport of macromolecules such as proteins, RNAs, ribonucleoparticles (RNPs), and ribosomal subunits across the nuclear envelope. Due to its 8-fold rotational symmetry, all subunits are present with 8 copies or multiples thereof. Part of a tetrameric NUP188-NUP170-NIC96-NUP53 module.</text>
</comment>
<comment type="interaction">
    <interactant intactId="EBI-4325194">
        <id>G0SFH5</id>
    </interactant>
    <interactant intactId="EBI-4325173">
        <id>G0S024</id>
        <label>NIC96</label>
    </interactant>
    <organismsDiffer>false</organismsDiffer>
    <experiments>5</experiments>
</comment>
<comment type="interaction">
    <interactant intactId="EBI-4325194">
        <id>G0SFH5</id>
    </interactant>
    <interactant intactId="EBI-4325171">
        <id>G0S156</id>
        <label>NUP53</label>
    </interactant>
    <organismsDiffer>false</organismsDiffer>
    <experiments>3</experiments>
</comment>
<comment type="subcellular location">
    <subcellularLocation>
        <location evidence="1">Nucleus</location>
        <location evidence="1">Nuclear pore complex</location>
    </subcellularLocation>
    <subcellularLocation>
        <location evidence="1">Nucleus membrane</location>
        <topology evidence="1">Peripheral membrane protein</topology>
        <orientation evidence="1">Cytoplasmic side</orientation>
    </subcellularLocation>
    <subcellularLocation>
        <location evidence="1">Nucleus membrane</location>
        <topology evidence="1">Peripheral membrane protein</topology>
        <orientation evidence="1">Nucleoplasmic side</orientation>
    </subcellularLocation>
    <text evidence="1">Symmetric distribution.</text>
</comment>
<comment type="similarity">
    <text evidence="4">Belongs to the Nup188 family.</text>
</comment>
<evidence type="ECO:0000250" key="1">
    <source>
        <dbReference type="UniProtKB" id="P52593"/>
    </source>
</evidence>
<evidence type="ECO:0000269" key="2">
    <source>
    </source>
</evidence>
<evidence type="ECO:0000303" key="3">
    <source>
    </source>
</evidence>
<evidence type="ECO:0000305" key="4"/>
<evidence type="ECO:0007829" key="5">
    <source>
        <dbReference type="PDB" id="5CWU"/>
    </source>
</evidence>
<evidence type="ECO:0007829" key="6">
    <source>
        <dbReference type="PDB" id="7MVW"/>
    </source>
</evidence>
<evidence type="ECO:0007829" key="7">
    <source>
        <dbReference type="PDB" id="7MVY"/>
    </source>
</evidence>
<evidence type="ECO:0007829" key="8">
    <source>
        <dbReference type="PDB" id="7MVZ"/>
    </source>
</evidence>
<organism>
    <name type="scientific">Chaetomium thermophilum (strain DSM 1495 / CBS 144.50 / IMI 039719)</name>
    <name type="common">Thermochaetoides thermophila</name>
    <dbReference type="NCBI Taxonomy" id="759272"/>
    <lineage>
        <taxon>Eukaryota</taxon>
        <taxon>Fungi</taxon>
        <taxon>Dikarya</taxon>
        <taxon>Ascomycota</taxon>
        <taxon>Pezizomycotina</taxon>
        <taxon>Sordariomycetes</taxon>
        <taxon>Sordariomycetidae</taxon>
        <taxon>Sordariales</taxon>
        <taxon>Chaetomiaceae</taxon>
        <taxon>Thermochaetoides</taxon>
    </lineage>
</organism>